<sequence length="141" mass="15527">MAMHLNENLDDNGEMHDINVTPFIDVMLVLLIIFMVAAPLATVDVKVNLPASTSTPQPRPEKPVYLSVKADNSMFIGNDPVTDETMITALNALTEGKKDTTIFFRADKTVDYETLMKVMDTLHQAGYLKIGLVGEETAKAK</sequence>
<accession>P0ABV5</accession>
<accession>P18784</accession>
<organism>
    <name type="scientific">Shigella flexneri</name>
    <dbReference type="NCBI Taxonomy" id="623"/>
    <lineage>
        <taxon>Bacteria</taxon>
        <taxon>Pseudomonadati</taxon>
        <taxon>Pseudomonadota</taxon>
        <taxon>Gammaproteobacteria</taxon>
        <taxon>Enterobacterales</taxon>
        <taxon>Enterobacteriaceae</taxon>
        <taxon>Shigella</taxon>
    </lineage>
</organism>
<comment type="function">
    <text evidence="1">Involved in the TonB-dependent energy-dependent transport of various receptor-bound substrates.</text>
</comment>
<comment type="subunit">
    <text evidence="1">The accessory proteins ExbB and ExbD seem to form a complex with TonB.</text>
</comment>
<comment type="subcellular location">
    <subcellularLocation>
        <location evidence="1">Cell inner membrane</location>
        <topology evidence="1">Single-pass type II membrane protein</topology>
    </subcellularLocation>
</comment>
<comment type="similarity">
    <text evidence="2">Belongs to the ExbD/TolR family.</text>
</comment>
<feature type="chain" id="PRO_0000129130" description="Biopolymer transport protein ExbD">
    <location>
        <begin position="1"/>
        <end position="141"/>
    </location>
</feature>
<feature type="topological domain" description="Cytoplasmic" evidence="2">
    <location>
        <begin position="1"/>
        <end position="22"/>
    </location>
</feature>
<feature type="transmembrane region" description="Helical; Signal-anchor for type II membrane protein" evidence="2">
    <location>
        <begin position="23"/>
        <end position="43"/>
    </location>
</feature>
<feature type="topological domain" description="Periplasmic" evidence="2">
    <location>
        <begin position="44"/>
        <end position="141"/>
    </location>
</feature>
<evidence type="ECO:0000250" key="1"/>
<evidence type="ECO:0000305" key="2"/>
<name>EXBD_SHIFL</name>
<gene>
    <name type="primary">exbD</name>
    <name type="ordered locus">SF3050</name>
    <name type="ordered locus">S3253</name>
</gene>
<keyword id="KW-0080">Bacteriocin transport</keyword>
<keyword id="KW-0997">Cell inner membrane</keyword>
<keyword id="KW-1003">Cell membrane</keyword>
<keyword id="KW-0472">Membrane</keyword>
<keyword id="KW-0653">Protein transport</keyword>
<keyword id="KW-1185">Reference proteome</keyword>
<keyword id="KW-0735">Signal-anchor</keyword>
<keyword id="KW-0812">Transmembrane</keyword>
<keyword id="KW-1133">Transmembrane helix</keyword>
<keyword id="KW-0813">Transport</keyword>
<dbReference type="EMBL" id="AE005674">
    <property type="protein sequence ID" value="AAN44528.1"/>
    <property type="molecule type" value="Genomic_DNA"/>
</dbReference>
<dbReference type="EMBL" id="AE014073">
    <property type="protein sequence ID" value="AAP18340.1"/>
    <property type="molecule type" value="Genomic_DNA"/>
</dbReference>
<dbReference type="RefSeq" id="NP_708821.1">
    <property type="nucleotide sequence ID" value="NC_004337.2"/>
</dbReference>
<dbReference type="RefSeq" id="WP_001240712.1">
    <property type="nucleotide sequence ID" value="NZ_WPGW01000034.1"/>
</dbReference>
<dbReference type="BMRB" id="P0ABV5"/>
<dbReference type="SMR" id="P0ABV5"/>
<dbReference type="STRING" id="198214.SF3050"/>
<dbReference type="PaxDb" id="198214-SF3050"/>
<dbReference type="GeneID" id="1026651"/>
<dbReference type="GeneID" id="93778982"/>
<dbReference type="KEGG" id="sfl:SF3050"/>
<dbReference type="KEGG" id="sfx:S3253"/>
<dbReference type="PATRIC" id="fig|198214.7.peg.3624"/>
<dbReference type="HOGENOM" id="CLU_085305_1_3_6"/>
<dbReference type="Proteomes" id="UP000001006">
    <property type="component" value="Chromosome"/>
</dbReference>
<dbReference type="Proteomes" id="UP000002673">
    <property type="component" value="Chromosome"/>
</dbReference>
<dbReference type="GO" id="GO:0005886">
    <property type="term" value="C:plasma membrane"/>
    <property type="evidence" value="ECO:0007669"/>
    <property type="project" value="UniProtKB-SubCell"/>
</dbReference>
<dbReference type="GO" id="GO:0022857">
    <property type="term" value="F:transmembrane transporter activity"/>
    <property type="evidence" value="ECO:0007669"/>
    <property type="project" value="InterPro"/>
</dbReference>
<dbReference type="GO" id="GO:0043213">
    <property type="term" value="P:bacteriocin transport"/>
    <property type="evidence" value="ECO:0007669"/>
    <property type="project" value="UniProtKB-KW"/>
</dbReference>
<dbReference type="GO" id="GO:0015031">
    <property type="term" value="P:protein transport"/>
    <property type="evidence" value="ECO:0007669"/>
    <property type="project" value="UniProtKB-KW"/>
</dbReference>
<dbReference type="FunFam" id="3.30.420.270:FF:000002">
    <property type="entry name" value="TonB system transport protein ExbD"/>
    <property type="match status" value="1"/>
</dbReference>
<dbReference type="Gene3D" id="3.30.420.270">
    <property type="match status" value="1"/>
</dbReference>
<dbReference type="InterPro" id="IPR003400">
    <property type="entry name" value="ExbD"/>
</dbReference>
<dbReference type="InterPro" id="IPR014170">
    <property type="entry name" value="TonB_ExbD_1"/>
</dbReference>
<dbReference type="NCBIfam" id="TIGR02803">
    <property type="entry name" value="ExbD_1"/>
    <property type="match status" value="1"/>
</dbReference>
<dbReference type="NCBIfam" id="NF008429">
    <property type="entry name" value="PRK11267.1"/>
    <property type="match status" value="1"/>
</dbReference>
<dbReference type="PANTHER" id="PTHR30558:SF9">
    <property type="entry name" value="BIOPOLYMER TRANSPORT PROTEIN EXBD"/>
    <property type="match status" value="1"/>
</dbReference>
<dbReference type="PANTHER" id="PTHR30558">
    <property type="entry name" value="EXBD MEMBRANE COMPONENT OF PMF-DRIVEN MACROMOLECULE IMPORT SYSTEM"/>
    <property type="match status" value="1"/>
</dbReference>
<dbReference type="Pfam" id="PF02472">
    <property type="entry name" value="ExbD"/>
    <property type="match status" value="1"/>
</dbReference>
<proteinExistence type="inferred from homology"/>
<protein>
    <recommendedName>
        <fullName>Biopolymer transport protein ExbD</fullName>
    </recommendedName>
</protein>
<reference key="1">
    <citation type="journal article" date="2002" name="Nucleic Acids Res.">
        <title>Genome sequence of Shigella flexneri 2a: insights into pathogenicity through comparison with genomes of Escherichia coli K12 and O157.</title>
        <authorList>
            <person name="Jin Q."/>
            <person name="Yuan Z."/>
            <person name="Xu J."/>
            <person name="Wang Y."/>
            <person name="Shen Y."/>
            <person name="Lu W."/>
            <person name="Wang J."/>
            <person name="Liu H."/>
            <person name="Yang J."/>
            <person name="Yang F."/>
            <person name="Zhang X."/>
            <person name="Zhang J."/>
            <person name="Yang G."/>
            <person name="Wu H."/>
            <person name="Qu D."/>
            <person name="Dong J."/>
            <person name="Sun L."/>
            <person name="Xue Y."/>
            <person name="Zhao A."/>
            <person name="Gao Y."/>
            <person name="Zhu J."/>
            <person name="Kan B."/>
            <person name="Ding K."/>
            <person name="Chen S."/>
            <person name="Cheng H."/>
            <person name="Yao Z."/>
            <person name="He B."/>
            <person name="Chen R."/>
            <person name="Ma D."/>
            <person name="Qiang B."/>
            <person name="Wen Y."/>
            <person name="Hou Y."/>
            <person name="Yu J."/>
        </authorList>
    </citation>
    <scope>NUCLEOTIDE SEQUENCE [LARGE SCALE GENOMIC DNA]</scope>
    <source>
        <strain>301 / Serotype 2a</strain>
    </source>
</reference>
<reference key="2">
    <citation type="journal article" date="2003" name="Infect. Immun.">
        <title>Complete genome sequence and comparative genomics of Shigella flexneri serotype 2a strain 2457T.</title>
        <authorList>
            <person name="Wei J."/>
            <person name="Goldberg M.B."/>
            <person name="Burland V."/>
            <person name="Venkatesan M.M."/>
            <person name="Deng W."/>
            <person name="Fournier G."/>
            <person name="Mayhew G.F."/>
            <person name="Plunkett G. III"/>
            <person name="Rose D.J."/>
            <person name="Darling A."/>
            <person name="Mau B."/>
            <person name="Perna N.T."/>
            <person name="Payne S.M."/>
            <person name="Runyen-Janecky L.J."/>
            <person name="Zhou S."/>
            <person name="Schwartz D.C."/>
            <person name="Blattner F.R."/>
        </authorList>
    </citation>
    <scope>NUCLEOTIDE SEQUENCE [LARGE SCALE GENOMIC DNA]</scope>
    <source>
        <strain>ATCC 700930 / 2457T / Serotype 2a</strain>
    </source>
</reference>